<protein>
    <recommendedName>
        <fullName>Sperm protamine P1</fullName>
    </recommendedName>
</protein>
<name>HSP1_MONRE</name>
<organism>
    <name type="scientific">Monophyllus redmani</name>
    <name type="common">Greater Antillean long-tongued bat</name>
    <dbReference type="NCBI Taxonomy" id="148052"/>
    <lineage>
        <taxon>Eukaryota</taxon>
        <taxon>Metazoa</taxon>
        <taxon>Chordata</taxon>
        <taxon>Craniata</taxon>
        <taxon>Vertebrata</taxon>
        <taxon>Euteleostomi</taxon>
        <taxon>Mammalia</taxon>
        <taxon>Eutheria</taxon>
        <taxon>Laurasiatheria</taxon>
        <taxon>Chiroptera</taxon>
        <taxon>Yangochiroptera</taxon>
        <taxon>Phyllostomidae</taxon>
        <taxon>Glossophaginae</taxon>
        <taxon>Monophyllus</taxon>
    </lineage>
</organism>
<reference key="1">
    <citation type="journal article" date="2002" name="Mol. Phylogenet. Evol.">
        <title>Characterization and phylogenetic utility of the mammalian protamine P1 gene.</title>
        <authorList>
            <person name="Van Den Bussche R.A."/>
            <person name="Hoofer S.R."/>
            <person name="Hansen E.W."/>
        </authorList>
    </citation>
    <scope>NUCLEOTIDE SEQUENCE [GENOMIC DNA]</scope>
</reference>
<sequence>MARYRCCRSPSRSRCRRRRRRCRRRRRRCCRRRRRVCCRRYTVRCRRR</sequence>
<accession>Q7JH06</accession>
<comment type="function">
    <text evidence="1">Protamines substitute for histones in the chromatin of sperm during the haploid phase of spermatogenesis. They compact sperm DNA into a highly condensed, stable and inactive complex (By similarity).</text>
</comment>
<comment type="subcellular location">
    <subcellularLocation>
        <location evidence="1">Nucleus</location>
    </subcellularLocation>
    <subcellularLocation>
        <location evidence="1">Chromosome</location>
    </subcellularLocation>
</comment>
<comment type="tissue specificity">
    <text>Testis.</text>
</comment>
<comment type="similarity">
    <text evidence="2">Belongs to the protamine P1 family.</text>
</comment>
<proteinExistence type="evidence at transcript level"/>
<gene>
    <name type="primary">PRM1</name>
</gene>
<evidence type="ECO:0000250" key="1"/>
<evidence type="ECO:0000305" key="2"/>
<keyword id="KW-0158">Chromosome</keyword>
<keyword id="KW-0217">Developmental protein</keyword>
<keyword id="KW-0221">Differentiation</keyword>
<keyword id="KW-0226">DNA condensation</keyword>
<keyword id="KW-0238">DNA-binding</keyword>
<keyword id="KW-0544">Nucleosome core</keyword>
<keyword id="KW-0539">Nucleus</keyword>
<keyword id="KW-0744">Spermatogenesis</keyword>
<feature type="chain" id="PRO_0000191496" description="Sperm protamine P1">
    <location>
        <begin position="1"/>
        <end position="48"/>
    </location>
</feature>
<dbReference type="EMBL" id="AF435935">
    <property type="protein sequence ID" value="AAL35569.1"/>
    <property type="molecule type" value="Genomic_DNA"/>
</dbReference>
<dbReference type="GO" id="GO:0000786">
    <property type="term" value="C:nucleosome"/>
    <property type="evidence" value="ECO:0007669"/>
    <property type="project" value="UniProtKB-KW"/>
</dbReference>
<dbReference type="GO" id="GO:0005634">
    <property type="term" value="C:nucleus"/>
    <property type="evidence" value="ECO:0007669"/>
    <property type="project" value="UniProtKB-SubCell"/>
</dbReference>
<dbReference type="GO" id="GO:0003677">
    <property type="term" value="F:DNA binding"/>
    <property type="evidence" value="ECO:0007669"/>
    <property type="project" value="UniProtKB-KW"/>
</dbReference>
<dbReference type="GO" id="GO:0030261">
    <property type="term" value="P:chromosome condensation"/>
    <property type="evidence" value="ECO:0007669"/>
    <property type="project" value="UniProtKB-KW"/>
</dbReference>
<dbReference type="GO" id="GO:0035092">
    <property type="term" value="P:sperm DNA condensation"/>
    <property type="evidence" value="ECO:0007669"/>
    <property type="project" value="InterPro"/>
</dbReference>
<dbReference type="InterPro" id="IPR000221">
    <property type="entry name" value="Protamine_P1"/>
</dbReference>
<dbReference type="Pfam" id="PF00260">
    <property type="entry name" value="Protamine_P1"/>
    <property type="match status" value="1"/>
</dbReference>
<dbReference type="PROSITE" id="PS00048">
    <property type="entry name" value="PROTAMINE_P1"/>
    <property type="match status" value="1"/>
</dbReference>